<comment type="function">
    <text evidence="1">Activates the atg1 kinase in a nutritional condition dependent manner through the TOR pathway, leading to autophagy. Also involved in cytoplasm to vacuole transport (Cvt) and more specifically in Cvt vesicle formation. Seems to play a role in the switching machinery regulating the conversion between the Cvt pathway and autophagy. Finally, atg13 is also required for glycogen storage during stationary phase (By similarity).</text>
</comment>
<comment type="subunit">
    <text evidence="1">Interacts with atg1 to form the atg1-atg13 kinase complex.</text>
</comment>
<comment type="subcellular location">
    <subcellularLocation>
        <location evidence="2">Cytoplasm</location>
    </subcellularLocation>
    <subcellularLocation>
        <location evidence="2">Preautophagosomal structure</location>
    </subcellularLocation>
</comment>
<comment type="similarity">
    <text evidence="4">Belongs to the ATG13 family. Fungi subfamily.</text>
</comment>
<organism>
    <name type="scientific">Sclerotinia sclerotiorum (strain ATCC 18683 / 1980 / Ss-1)</name>
    <name type="common">White mold</name>
    <name type="synonym">Whetzelinia sclerotiorum</name>
    <dbReference type="NCBI Taxonomy" id="665079"/>
    <lineage>
        <taxon>Eukaryota</taxon>
        <taxon>Fungi</taxon>
        <taxon>Dikarya</taxon>
        <taxon>Ascomycota</taxon>
        <taxon>Pezizomycotina</taxon>
        <taxon>Leotiomycetes</taxon>
        <taxon>Helotiales</taxon>
        <taxon>Sclerotiniaceae</taxon>
        <taxon>Sclerotinia</taxon>
    </lineage>
</organism>
<keyword id="KW-0072">Autophagy</keyword>
<keyword id="KW-0963">Cytoplasm</keyword>
<keyword id="KW-0653">Protein transport</keyword>
<keyword id="KW-1185">Reference proteome</keyword>
<keyword id="KW-0813">Transport</keyword>
<evidence type="ECO:0000250" key="1"/>
<evidence type="ECO:0000250" key="2">
    <source>
        <dbReference type="UniProtKB" id="Q06628"/>
    </source>
</evidence>
<evidence type="ECO:0000256" key="3">
    <source>
        <dbReference type="SAM" id="MobiDB-lite"/>
    </source>
</evidence>
<evidence type="ECO:0000305" key="4"/>
<accession>A7F7B2</accession>
<gene>
    <name type="primary">atg13</name>
    <name type="ORF">SS1G_13492</name>
</gene>
<dbReference type="EMBL" id="CH476645">
    <property type="protein sequence ID" value="EDN98633.1"/>
    <property type="molecule type" value="Genomic_DNA"/>
</dbReference>
<dbReference type="RefSeq" id="XP_001585608.1">
    <property type="nucleotide sequence ID" value="XM_001585558.1"/>
</dbReference>
<dbReference type="SMR" id="A7F7B2"/>
<dbReference type="FunCoup" id="A7F7B2">
    <property type="interactions" value="30"/>
</dbReference>
<dbReference type="STRING" id="665079.A7F7B2"/>
<dbReference type="EnsemblFungi" id="EDN98633">
    <property type="protein sequence ID" value="EDN98633"/>
    <property type="gene ID" value="SS1G_13492"/>
</dbReference>
<dbReference type="GeneID" id="5481606"/>
<dbReference type="KEGG" id="ssl:SS1G_13492"/>
<dbReference type="eggNOG" id="KOG4573">
    <property type="taxonomic scope" value="Eukaryota"/>
</dbReference>
<dbReference type="HOGENOM" id="CLU_007151_1_0_1"/>
<dbReference type="InParanoid" id="A7F7B2"/>
<dbReference type="OMA" id="FHQVGPT"/>
<dbReference type="Proteomes" id="UP000001312">
    <property type="component" value="Unassembled WGS sequence"/>
</dbReference>
<dbReference type="GO" id="GO:1990316">
    <property type="term" value="C:Atg1/ULK1 kinase complex"/>
    <property type="evidence" value="ECO:0000318"/>
    <property type="project" value="GO_Central"/>
</dbReference>
<dbReference type="GO" id="GO:0005776">
    <property type="term" value="C:autophagosome"/>
    <property type="evidence" value="ECO:0000318"/>
    <property type="project" value="GO_Central"/>
</dbReference>
<dbReference type="GO" id="GO:0005829">
    <property type="term" value="C:cytosol"/>
    <property type="evidence" value="ECO:0000318"/>
    <property type="project" value="GO_Central"/>
</dbReference>
<dbReference type="GO" id="GO:0000407">
    <property type="term" value="C:phagophore assembly site"/>
    <property type="evidence" value="ECO:0000318"/>
    <property type="project" value="GO_Central"/>
</dbReference>
<dbReference type="GO" id="GO:0019887">
    <property type="term" value="F:protein kinase regulator activity"/>
    <property type="evidence" value="ECO:0000318"/>
    <property type="project" value="GO_Central"/>
</dbReference>
<dbReference type="GO" id="GO:0000423">
    <property type="term" value="P:mitophagy"/>
    <property type="evidence" value="ECO:0000318"/>
    <property type="project" value="GO_Central"/>
</dbReference>
<dbReference type="GO" id="GO:0034727">
    <property type="term" value="P:piecemeal microautophagy of the nucleus"/>
    <property type="evidence" value="ECO:0000318"/>
    <property type="project" value="GO_Central"/>
</dbReference>
<dbReference type="GO" id="GO:0034497">
    <property type="term" value="P:protein localization to phagophore assembly site"/>
    <property type="evidence" value="ECO:0000318"/>
    <property type="project" value="GO_Central"/>
</dbReference>
<dbReference type="GO" id="GO:0015031">
    <property type="term" value="P:protein transport"/>
    <property type="evidence" value="ECO:0007669"/>
    <property type="project" value="UniProtKB-KW"/>
</dbReference>
<dbReference type="FunFam" id="3.30.900.10:FF:000010">
    <property type="entry name" value="Autophagy-related protein 13"/>
    <property type="match status" value="1"/>
</dbReference>
<dbReference type="Gene3D" id="6.10.140.1900">
    <property type="match status" value="1"/>
</dbReference>
<dbReference type="Gene3D" id="3.30.900.10">
    <property type="entry name" value="HORMA domain"/>
    <property type="match status" value="1"/>
</dbReference>
<dbReference type="InterPro" id="IPR040182">
    <property type="entry name" value="ATG13"/>
</dbReference>
<dbReference type="InterPro" id="IPR018731">
    <property type="entry name" value="Atg13_N"/>
</dbReference>
<dbReference type="InterPro" id="IPR036570">
    <property type="entry name" value="HORMA_dom_sf"/>
</dbReference>
<dbReference type="PANTHER" id="PTHR13430">
    <property type="match status" value="1"/>
</dbReference>
<dbReference type="PANTHER" id="PTHR13430:SF4">
    <property type="entry name" value="AUTOPHAGY-RELATED PROTEIN 13"/>
    <property type="match status" value="1"/>
</dbReference>
<dbReference type="Pfam" id="PF10033">
    <property type="entry name" value="ATG13"/>
    <property type="match status" value="1"/>
</dbReference>
<protein>
    <recommendedName>
        <fullName>Autophagy-related protein 13</fullName>
    </recommendedName>
</protein>
<name>ATG13_SCLS1</name>
<reference key="1">
    <citation type="journal article" date="2011" name="PLoS Genet.">
        <title>Genomic analysis of the necrotrophic fungal pathogens Sclerotinia sclerotiorum and Botrytis cinerea.</title>
        <authorList>
            <person name="Amselem J."/>
            <person name="Cuomo C.A."/>
            <person name="van Kan J.A.L."/>
            <person name="Viaud M."/>
            <person name="Benito E.P."/>
            <person name="Couloux A."/>
            <person name="Coutinho P.M."/>
            <person name="de Vries R.P."/>
            <person name="Dyer P.S."/>
            <person name="Fillinger S."/>
            <person name="Fournier E."/>
            <person name="Gout L."/>
            <person name="Hahn M."/>
            <person name="Kohn L."/>
            <person name="Lapalu N."/>
            <person name="Plummer K.M."/>
            <person name="Pradier J.-M."/>
            <person name="Quevillon E."/>
            <person name="Sharon A."/>
            <person name="Simon A."/>
            <person name="ten Have A."/>
            <person name="Tudzynski B."/>
            <person name="Tudzynski P."/>
            <person name="Wincker P."/>
            <person name="Andrew M."/>
            <person name="Anthouard V."/>
            <person name="Beever R.E."/>
            <person name="Beffa R."/>
            <person name="Benoit I."/>
            <person name="Bouzid O."/>
            <person name="Brault B."/>
            <person name="Chen Z."/>
            <person name="Choquer M."/>
            <person name="Collemare J."/>
            <person name="Cotton P."/>
            <person name="Danchin E.G."/>
            <person name="Da Silva C."/>
            <person name="Gautier A."/>
            <person name="Giraud C."/>
            <person name="Giraud T."/>
            <person name="Gonzalez C."/>
            <person name="Grossetete S."/>
            <person name="Gueldener U."/>
            <person name="Henrissat B."/>
            <person name="Howlett B.J."/>
            <person name="Kodira C."/>
            <person name="Kretschmer M."/>
            <person name="Lappartient A."/>
            <person name="Leroch M."/>
            <person name="Levis C."/>
            <person name="Mauceli E."/>
            <person name="Neuveglise C."/>
            <person name="Oeser B."/>
            <person name="Pearson M."/>
            <person name="Poulain J."/>
            <person name="Poussereau N."/>
            <person name="Quesneville H."/>
            <person name="Rascle C."/>
            <person name="Schumacher J."/>
            <person name="Segurens B."/>
            <person name="Sexton A."/>
            <person name="Silva E."/>
            <person name="Sirven C."/>
            <person name="Soanes D.M."/>
            <person name="Talbot N.J."/>
            <person name="Templeton M."/>
            <person name="Yandava C."/>
            <person name="Yarden O."/>
            <person name="Zeng Q."/>
            <person name="Rollins J.A."/>
            <person name="Lebrun M.-H."/>
            <person name="Dickman M."/>
        </authorList>
    </citation>
    <scope>NUCLEOTIDE SEQUENCE [LARGE SCALE GENOMIC DNA]</scope>
    <source>
        <strain>ATCC 18683 / 1980 / Ss-1</strain>
    </source>
</reference>
<sequence>MPHYQEVDDASGDGGPMAATGPSREAVKKMDQIIQNFHTKAAIIVLGARVGLPVVFTKEGTKKVNKWFQIETDDTDAYRDELHTWRMCGGFQNRPPPLIIETYLDTSHLTSSQRLVIVDDLGKRWDALDALSNSCGSNDGRSEVILERWKIELRDIPGEQPYDFGSTLPTIYKKCIVFFRSLYSTAKLVPAWKFKKSLGKNGSPTNSLIINCRITTGDTQPRRIDGLKQPILDHSGPVTSTYVLGATDTPAGQIFAEVTYRNDCNFRVDDSESILSSRFMGADEHFFTPSLAAKGDLSRRRSTKQTEIGSLPAHKHLTDDSGPVQTYGSLSTFHGNAPPRGSSPMSALRAQRPIGSDTSSPPVGSLPYSRPSLTSKGSLKSFEGMALARRTSLSFQPFKAGSLSSSPSRATYAGETLPASPGSLPRASGISALAQARNRSSLTAGMPATLRGGPVTSDNVVPTSVSSSPKPAPIARYSSSFTHRRSRPSYGGASKLVDDDQGSSGKQSVSSSVQPGSGILAEAGAGGSSGSLQTDDDNISDFLKLLDSKKTLQSFEPSGEASKKRATAQLSKFQSMRDSHNALTDSMASSSMLQRSSSSSSRQLSSVPPMVAATSISAASSPGKPISPHTPHTPAIPSRLSANSIAEYDQPRRVTRRSRTTEARLEDVQDNDHSNDAGTNAIDIPTSPRPYYPHARRSSSVAQQHRALAIDDDLGDLPFGVHRSISLGADDREPPSLSTLLNIGQASDDVESPTGQSPSLLQPAPRISEGSTAMSRQTSSSLEAHDSEVPQLSRFSGPGSANSPYRPRIGKTGGRGVTPPQTGSFSSLLVDRGSASGSERAGGGRYSFSRGIGAYEADDEPLLFDMSEIGRDISRRSIDEPRGGYEASRGGDSGSSSRRGSRWGR</sequence>
<feature type="chain" id="PRO_0000317952" description="Autophagy-related protein 13">
    <location>
        <begin position="1"/>
        <end position="905"/>
    </location>
</feature>
<feature type="region of interest" description="Disordered" evidence="3">
    <location>
        <begin position="1"/>
        <end position="22"/>
    </location>
</feature>
<feature type="region of interest" description="Disordered" evidence="3">
    <location>
        <begin position="295"/>
        <end position="377"/>
    </location>
</feature>
<feature type="region of interest" description="Disordered" evidence="3">
    <location>
        <begin position="398"/>
        <end position="425"/>
    </location>
</feature>
<feature type="region of interest" description="Disordered" evidence="3">
    <location>
        <begin position="444"/>
        <end position="535"/>
    </location>
</feature>
<feature type="region of interest" description="Disordered" evidence="3">
    <location>
        <begin position="554"/>
        <end position="704"/>
    </location>
</feature>
<feature type="region of interest" description="Disordered" evidence="3">
    <location>
        <begin position="747"/>
        <end position="850"/>
    </location>
</feature>
<feature type="region of interest" description="Disordered" evidence="3">
    <location>
        <begin position="871"/>
        <end position="905"/>
    </location>
</feature>
<feature type="compositionally biased region" description="Polar residues" evidence="3">
    <location>
        <begin position="323"/>
        <end position="334"/>
    </location>
</feature>
<feature type="compositionally biased region" description="Low complexity" evidence="3">
    <location>
        <begin position="454"/>
        <end position="469"/>
    </location>
</feature>
<feature type="compositionally biased region" description="Low complexity" evidence="3">
    <location>
        <begin position="502"/>
        <end position="523"/>
    </location>
</feature>
<feature type="compositionally biased region" description="Low complexity" evidence="3">
    <location>
        <begin position="586"/>
        <end position="606"/>
    </location>
</feature>
<feature type="compositionally biased region" description="Basic and acidic residues" evidence="3">
    <location>
        <begin position="659"/>
        <end position="675"/>
    </location>
</feature>
<feature type="compositionally biased region" description="Polar residues" evidence="3">
    <location>
        <begin position="769"/>
        <end position="782"/>
    </location>
</feature>
<feature type="compositionally biased region" description="Basic and acidic residues" evidence="3">
    <location>
        <begin position="871"/>
        <end position="883"/>
    </location>
</feature>
<feature type="compositionally biased region" description="Low complexity" evidence="3">
    <location>
        <begin position="888"/>
        <end position="898"/>
    </location>
</feature>
<proteinExistence type="inferred from homology"/>